<proteinExistence type="inferred from homology"/>
<accession>Q67PD8</accession>
<dbReference type="EC" id="2.1.1.228" evidence="1"/>
<dbReference type="EMBL" id="AP006840">
    <property type="protein sequence ID" value="BAD40455.1"/>
    <property type="molecule type" value="Genomic_DNA"/>
</dbReference>
<dbReference type="RefSeq" id="WP_011195600.1">
    <property type="nucleotide sequence ID" value="NC_006177.1"/>
</dbReference>
<dbReference type="SMR" id="Q67PD8"/>
<dbReference type="STRING" id="292459.STH1470"/>
<dbReference type="KEGG" id="sth:STH1470"/>
<dbReference type="eggNOG" id="COG0336">
    <property type="taxonomic scope" value="Bacteria"/>
</dbReference>
<dbReference type="HOGENOM" id="CLU_047363_0_1_9"/>
<dbReference type="OrthoDB" id="9807416at2"/>
<dbReference type="Proteomes" id="UP000000417">
    <property type="component" value="Chromosome"/>
</dbReference>
<dbReference type="GO" id="GO:0005829">
    <property type="term" value="C:cytosol"/>
    <property type="evidence" value="ECO:0007669"/>
    <property type="project" value="TreeGrafter"/>
</dbReference>
<dbReference type="GO" id="GO:0052906">
    <property type="term" value="F:tRNA (guanine(37)-N1)-methyltransferase activity"/>
    <property type="evidence" value="ECO:0007669"/>
    <property type="project" value="UniProtKB-UniRule"/>
</dbReference>
<dbReference type="GO" id="GO:0002939">
    <property type="term" value="P:tRNA N1-guanine methylation"/>
    <property type="evidence" value="ECO:0007669"/>
    <property type="project" value="TreeGrafter"/>
</dbReference>
<dbReference type="CDD" id="cd18080">
    <property type="entry name" value="TrmD-like"/>
    <property type="match status" value="1"/>
</dbReference>
<dbReference type="FunFam" id="1.10.1270.20:FF:000001">
    <property type="entry name" value="tRNA (guanine-N(1)-)-methyltransferase"/>
    <property type="match status" value="1"/>
</dbReference>
<dbReference type="FunFam" id="3.40.1280.10:FF:000001">
    <property type="entry name" value="tRNA (guanine-N(1)-)-methyltransferase"/>
    <property type="match status" value="1"/>
</dbReference>
<dbReference type="Gene3D" id="3.40.1280.10">
    <property type="match status" value="1"/>
</dbReference>
<dbReference type="Gene3D" id="1.10.1270.20">
    <property type="entry name" value="tRNA(m1g37)methyltransferase, domain 2"/>
    <property type="match status" value="1"/>
</dbReference>
<dbReference type="HAMAP" id="MF_00605">
    <property type="entry name" value="TrmD"/>
    <property type="match status" value="1"/>
</dbReference>
<dbReference type="InterPro" id="IPR029028">
    <property type="entry name" value="Alpha/beta_knot_MTases"/>
</dbReference>
<dbReference type="InterPro" id="IPR023148">
    <property type="entry name" value="tRNA_m1G_MeTrfase_C_sf"/>
</dbReference>
<dbReference type="InterPro" id="IPR002649">
    <property type="entry name" value="tRNA_m1G_MeTrfase_TrmD"/>
</dbReference>
<dbReference type="InterPro" id="IPR029026">
    <property type="entry name" value="tRNA_m1G_MTases_N"/>
</dbReference>
<dbReference type="InterPro" id="IPR016009">
    <property type="entry name" value="tRNA_MeTrfase_TRMD/TRM10"/>
</dbReference>
<dbReference type="NCBIfam" id="NF000648">
    <property type="entry name" value="PRK00026.1"/>
    <property type="match status" value="1"/>
</dbReference>
<dbReference type="NCBIfam" id="TIGR00088">
    <property type="entry name" value="trmD"/>
    <property type="match status" value="1"/>
</dbReference>
<dbReference type="PANTHER" id="PTHR46417">
    <property type="entry name" value="TRNA (GUANINE-N(1)-)-METHYLTRANSFERASE"/>
    <property type="match status" value="1"/>
</dbReference>
<dbReference type="PANTHER" id="PTHR46417:SF1">
    <property type="entry name" value="TRNA (GUANINE-N(1)-)-METHYLTRANSFERASE"/>
    <property type="match status" value="1"/>
</dbReference>
<dbReference type="Pfam" id="PF01746">
    <property type="entry name" value="tRNA_m1G_MT"/>
    <property type="match status" value="1"/>
</dbReference>
<dbReference type="PIRSF" id="PIRSF000386">
    <property type="entry name" value="tRNA_mtase"/>
    <property type="match status" value="1"/>
</dbReference>
<dbReference type="SUPFAM" id="SSF75217">
    <property type="entry name" value="alpha/beta knot"/>
    <property type="match status" value="1"/>
</dbReference>
<reference key="1">
    <citation type="journal article" date="2004" name="Nucleic Acids Res.">
        <title>Genome sequence of Symbiobacterium thermophilum, an uncultivable bacterium that depends on microbial commensalism.</title>
        <authorList>
            <person name="Ueda K."/>
            <person name="Yamashita A."/>
            <person name="Ishikawa J."/>
            <person name="Shimada M."/>
            <person name="Watsuji T."/>
            <person name="Morimura K."/>
            <person name="Ikeda H."/>
            <person name="Hattori M."/>
            <person name="Beppu T."/>
        </authorList>
    </citation>
    <scope>NUCLEOTIDE SEQUENCE [LARGE SCALE GENOMIC DNA]</scope>
    <source>
        <strain>DSM 24528 / JCM 14929 / IAM 14863 / T</strain>
    </source>
</reference>
<name>TRMD_SYMTH</name>
<evidence type="ECO:0000255" key="1">
    <source>
        <dbReference type="HAMAP-Rule" id="MF_00605"/>
    </source>
</evidence>
<keyword id="KW-0963">Cytoplasm</keyword>
<keyword id="KW-0489">Methyltransferase</keyword>
<keyword id="KW-1185">Reference proteome</keyword>
<keyword id="KW-0949">S-adenosyl-L-methionine</keyword>
<keyword id="KW-0808">Transferase</keyword>
<keyword id="KW-0819">tRNA processing</keyword>
<sequence>MLIQILTIHPAIVAPVFRESILGRACEAGILDLRVVNIRDFALSKHQQTDDYPYGGGAGLLMKPEPVFGAVRWAAGRAPAGARPPRVILMDPQGRRFDQRYAEELAREDHLILICGRYEGFDERIRALATDEISIGDYVLMGGEVAALVVVEAVTRLIPGVLGDLESSVAESHTSGLLEGPQYTRPAEFEGMRVPEILTSGNHGAIARWRREQALRRTFERRPDLLQSADLTPEERRLVEAWRTRQS</sequence>
<organism>
    <name type="scientific">Symbiobacterium thermophilum (strain DSM 24528 / JCM 14929 / IAM 14863 / T)</name>
    <dbReference type="NCBI Taxonomy" id="292459"/>
    <lineage>
        <taxon>Bacteria</taxon>
        <taxon>Bacillati</taxon>
        <taxon>Bacillota</taxon>
        <taxon>Clostridia</taxon>
        <taxon>Eubacteriales</taxon>
        <taxon>Symbiobacteriaceae</taxon>
        <taxon>Symbiobacterium</taxon>
    </lineage>
</organism>
<protein>
    <recommendedName>
        <fullName evidence="1">tRNA (guanine-N(1)-)-methyltransferase</fullName>
        <ecNumber evidence="1">2.1.1.228</ecNumber>
    </recommendedName>
    <alternativeName>
        <fullName evidence="1">M1G-methyltransferase</fullName>
    </alternativeName>
    <alternativeName>
        <fullName evidence="1">tRNA [GM37] methyltransferase</fullName>
    </alternativeName>
</protein>
<gene>
    <name evidence="1" type="primary">trmD</name>
    <name type="ordered locus">STH1470</name>
</gene>
<comment type="function">
    <text evidence="1">Specifically methylates guanosine-37 in various tRNAs.</text>
</comment>
<comment type="catalytic activity">
    <reaction evidence="1">
        <text>guanosine(37) in tRNA + S-adenosyl-L-methionine = N(1)-methylguanosine(37) in tRNA + S-adenosyl-L-homocysteine + H(+)</text>
        <dbReference type="Rhea" id="RHEA:36899"/>
        <dbReference type="Rhea" id="RHEA-COMP:10145"/>
        <dbReference type="Rhea" id="RHEA-COMP:10147"/>
        <dbReference type="ChEBI" id="CHEBI:15378"/>
        <dbReference type="ChEBI" id="CHEBI:57856"/>
        <dbReference type="ChEBI" id="CHEBI:59789"/>
        <dbReference type="ChEBI" id="CHEBI:73542"/>
        <dbReference type="ChEBI" id="CHEBI:74269"/>
        <dbReference type="EC" id="2.1.1.228"/>
    </reaction>
</comment>
<comment type="subunit">
    <text evidence="1">Homodimer.</text>
</comment>
<comment type="subcellular location">
    <subcellularLocation>
        <location evidence="1">Cytoplasm</location>
    </subcellularLocation>
</comment>
<comment type="similarity">
    <text evidence="1">Belongs to the RNA methyltransferase TrmD family.</text>
</comment>
<feature type="chain" id="PRO_0000060479" description="tRNA (guanine-N(1)-)-methyltransferase">
    <location>
        <begin position="1"/>
        <end position="247"/>
    </location>
</feature>
<feature type="binding site" evidence="1">
    <location>
        <position position="116"/>
    </location>
    <ligand>
        <name>S-adenosyl-L-methionine</name>
        <dbReference type="ChEBI" id="CHEBI:59789"/>
    </ligand>
</feature>
<feature type="binding site" evidence="1">
    <location>
        <begin position="135"/>
        <end position="140"/>
    </location>
    <ligand>
        <name>S-adenosyl-L-methionine</name>
        <dbReference type="ChEBI" id="CHEBI:59789"/>
    </ligand>
</feature>